<comment type="function">
    <text evidence="1">Catalyzes the conversion of L-lactate to pyruvate. Is coupled to the respiratory chain.</text>
</comment>
<comment type="catalytic activity">
    <reaction evidence="1">
        <text>(S)-lactate + A = pyruvate + AH2</text>
        <dbReference type="Rhea" id="RHEA:45816"/>
        <dbReference type="ChEBI" id="CHEBI:13193"/>
        <dbReference type="ChEBI" id="CHEBI:15361"/>
        <dbReference type="ChEBI" id="CHEBI:16651"/>
        <dbReference type="ChEBI" id="CHEBI:17499"/>
    </reaction>
</comment>
<comment type="cofactor">
    <cofactor evidence="1">
        <name>FMN</name>
        <dbReference type="ChEBI" id="CHEBI:58210"/>
    </cofactor>
</comment>
<comment type="subcellular location">
    <subcellularLocation>
        <location evidence="1">Cell inner membrane</location>
        <topology evidence="1">Peripheral membrane protein</topology>
    </subcellularLocation>
</comment>
<comment type="similarity">
    <text evidence="1">Belongs to the FMN-dependent alpha-hydroxy acid dehydrogenase family.</text>
</comment>
<name>LLDD_SALTY</name>
<protein>
    <recommendedName>
        <fullName evidence="1">L-lactate dehydrogenase</fullName>
        <ecNumber evidence="1">1.1.-.-</ecNumber>
    </recommendedName>
</protein>
<sequence>MIISAASDYRAAAQRTLPPFLFHYIDGGAYAEYTLRRNVEDLSQVALRQRVLKNMSDLSLETTLFNETLSMPVALAPVGLCGMYARRGEVQAAAAADAKGIPFTLSTVSVCPIEEVAPTIKRPMWFQLYVLRDRGFMRNALERAKAAGCSTLVFTVDMPTPGARYRDAHSGMSGPNAAMRRYWQAVMHPKWAWDVGLNGRPHDLGNISAYLGKPTGLEDYIGWLANNFDPSISWKDLEWIREFWDGPMVIKGILDPEDARDAVRFGADGIVVSNHGGRQLDGVLSSARALPAIADAVKGDIAILADSGIRNGLDVVRMIALGADTVLLGRAYLYALATAGKAGVANLLDLIEKEMKVAMTLTGAKSISEISGDSLVQELGKSLPAALAPMSKGDAA</sequence>
<feature type="chain" id="PRO_0000206347" description="L-lactate dehydrogenase">
    <location>
        <begin position="1"/>
        <end position="396"/>
    </location>
</feature>
<feature type="domain" description="FMN hydroxy acid dehydrogenase" evidence="1">
    <location>
        <begin position="1"/>
        <end position="380"/>
    </location>
</feature>
<feature type="active site" description="Proton acceptor" evidence="1">
    <location>
        <position position="275"/>
    </location>
</feature>
<feature type="binding site" evidence="1">
    <location>
        <position position="24"/>
    </location>
    <ligand>
        <name>substrate</name>
    </ligand>
</feature>
<feature type="binding site" evidence="1">
    <location>
        <position position="106"/>
    </location>
    <ligand>
        <name>FMN</name>
        <dbReference type="ChEBI" id="CHEBI:58210"/>
    </ligand>
</feature>
<feature type="binding site" evidence="1">
    <location>
        <position position="127"/>
    </location>
    <ligand>
        <name>FMN</name>
        <dbReference type="ChEBI" id="CHEBI:58210"/>
    </ligand>
</feature>
<feature type="binding site" evidence="1">
    <location>
        <position position="129"/>
    </location>
    <ligand>
        <name>substrate</name>
    </ligand>
</feature>
<feature type="binding site" evidence="1">
    <location>
        <position position="155"/>
    </location>
    <ligand>
        <name>FMN</name>
        <dbReference type="ChEBI" id="CHEBI:58210"/>
    </ligand>
</feature>
<feature type="binding site" evidence="1">
    <location>
        <position position="164"/>
    </location>
    <ligand>
        <name>substrate</name>
    </ligand>
</feature>
<feature type="binding site" evidence="1">
    <location>
        <position position="251"/>
    </location>
    <ligand>
        <name>FMN</name>
        <dbReference type="ChEBI" id="CHEBI:58210"/>
    </ligand>
</feature>
<feature type="binding site" evidence="1">
    <location>
        <position position="278"/>
    </location>
    <ligand>
        <name>substrate</name>
    </ligand>
</feature>
<feature type="binding site" evidence="1">
    <location>
        <begin position="306"/>
        <end position="330"/>
    </location>
    <ligand>
        <name>FMN</name>
        <dbReference type="ChEBI" id="CHEBI:58210"/>
    </ligand>
</feature>
<dbReference type="EC" id="1.1.-.-" evidence="1"/>
<dbReference type="EMBL" id="AE006468">
    <property type="protein sequence ID" value="AAL22553.1"/>
    <property type="molecule type" value="Genomic_DNA"/>
</dbReference>
<dbReference type="RefSeq" id="NP_462594.1">
    <property type="nucleotide sequence ID" value="NC_003197.2"/>
</dbReference>
<dbReference type="RefSeq" id="WP_000586988.1">
    <property type="nucleotide sequence ID" value="NC_003197.2"/>
</dbReference>
<dbReference type="SMR" id="Q8ZL61"/>
<dbReference type="STRING" id="99287.STM3694"/>
<dbReference type="PaxDb" id="99287-STM3694"/>
<dbReference type="GeneID" id="1255218"/>
<dbReference type="KEGG" id="stm:STM3694"/>
<dbReference type="PATRIC" id="fig|99287.12.peg.3907"/>
<dbReference type="HOGENOM" id="CLU_020639_0_0_6"/>
<dbReference type="OMA" id="RIWFRPK"/>
<dbReference type="PhylomeDB" id="Q8ZL61"/>
<dbReference type="BioCyc" id="SENT99287:STM3694-MONOMER"/>
<dbReference type="Proteomes" id="UP000001014">
    <property type="component" value="Chromosome"/>
</dbReference>
<dbReference type="GO" id="GO:0005886">
    <property type="term" value="C:plasma membrane"/>
    <property type="evidence" value="ECO:0000318"/>
    <property type="project" value="GO_Central"/>
</dbReference>
<dbReference type="GO" id="GO:0010181">
    <property type="term" value="F:FMN binding"/>
    <property type="evidence" value="ECO:0007669"/>
    <property type="project" value="InterPro"/>
</dbReference>
<dbReference type="GO" id="GO:0004459">
    <property type="term" value="F:L-lactate dehydrogenase activity"/>
    <property type="evidence" value="ECO:0000318"/>
    <property type="project" value="GO_Central"/>
</dbReference>
<dbReference type="GO" id="GO:0009060">
    <property type="term" value="P:aerobic respiration"/>
    <property type="evidence" value="ECO:0000318"/>
    <property type="project" value="GO_Central"/>
</dbReference>
<dbReference type="GO" id="GO:0006089">
    <property type="term" value="P:lactate metabolic process"/>
    <property type="evidence" value="ECO:0007669"/>
    <property type="project" value="UniProtKB-UniRule"/>
</dbReference>
<dbReference type="CDD" id="cd02809">
    <property type="entry name" value="alpha_hydroxyacid_oxid_FMN"/>
    <property type="match status" value="1"/>
</dbReference>
<dbReference type="FunFam" id="3.20.20.70:FF:000029">
    <property type="entry name" value="L-lactate dehydrogenase"/>
    <property type="match status" value="1"/>
</dbReference>
<dbReference type="Gene3D" id="3.20.20.70">
    <property type="entry name" value="Aldolase class I"/>
    <property type="match status" value="1"/>
</dbReference>
<dbReference type="HAMAP" id="MF_01559">
    <property type="entry name" value="L_lact_dehydr"/>
    <property type="match status" value="1"/>
</dbReference>
<dbReference type="InterPro" id="IPR013785">
    <property type="entry name" value="Aldolase_TIM"/>
</dbReference>
<dbReference type="InterPro" id="IPR012133">
    <property type="entry name" value="Alpha-hydoxy_acid_DH_FMN"/>
</dbReference>
<dbReference type="InterPro" id="IPR000262">
    <property type="entry name" value="FMN-dep_DH"/>
</dbReference>
<dbReference type="InterPro" id="IPR037396">
    <property type="entry name" value="FMN_HAD"/>
</dbReference>
<dbReference type="InterPro" id="IPR008259">
    <property type="entry name" value="FMN_hydac_DH_AS"/>
</dbReference>
<dbReference type="InterPro" id="IPR020920">
    <property type="entry name" value="LldD"/>
</dbReference>
<dbReference type="NCBIfam" id="NF033901">
    <property type="entry name" value="L_lactate_LldD"/>
    <property type="match status" value="1"/>
</dbReference>
<dbReference type="NCBIfam" id="NF008398">
    <property type="entry name" value="PRK11197.1"/>
    <property type="match status" value="1"/>
</dbReference>
<dbReference type="PANTHER" id="PTHR10578:SF85">
    <property type="entry name" value="L-LACTATE DEHYDROGENASE"/>
    <property type="match status" value="1"/>
</dbReference>
<dbReference type="PANTHER" id="PTHR10578">
    <property type="entry name" value="S -2-HYDROXY-ACID OXIDASE-RELATED"/>
    <property type="match status" value="1"/>
</dbReference>
<dbReference type="Pfam" id="PF01070">
    <property type="entry name" value="FMN_dh"/>
    <property type="match status" value="1"/>
</dbReference>
<dbReference type="PIRSF" id="PIRSF000138">
    <property type="entry name" value="Al-hdrx_acd_dh"/>
    <property type="match status" value="1"/>
</dbReference>
<dbReference type="SUPFAM" id="SSF51395">
    <property type="entry name" value="FMN-linked oxidoreductases"/>
    <property type="match status" value="1"/>
</dbReference>
<dbReference type="PROSITE" id="PS00557">
    <property type="entry name" value="FMN_HYDROXY_ACID_DH_1"/>
    <property type="match status" value="1"/>
</dbReference>
<dbReference type="PROSITE" id="PS51349">
    <property type="entry name" value="FMN_HYDROXY_ACID_DH_2"/>
    <property type="match status" value="1"/>
</dbReference>
<reference key="1">
    <citation type="journal article" date="2001" name="Nature">
        <title>Complete genome sequence of Salmonella enterica serovar Typhimurium LT2.</title>
        <authorList>
            <person name="McClelland M."/>
            <person name="Sanderson K.E."/>
            <person name="Spieth J."/>
            <person name="Clifton S.W."/>
            <person name="Latreille P."/>
            <person name="Courtney L."/>
            <person name="Porwollik S."/>
            <person name="Ali J."/>
            <person name="Dante M."/>
            <person name="Du F."/>
            <person name="Hou S."/>
            <person name="Layman D."/>
            <person name="Leonard S."/>
            <person name="Nguyen C."/>
            <person name="Scott K."/>
            <person name="Holmes A."/>
            <person name="Grewal N."/>
            <person name="Mulvaney E."/>
            <person name="Ryan E."/>
            <person name="Sun H."/>
            <person name="Florea L."/>
            <person name="Miller W."/>
            <person name="Stoneking T."/>
            <person name="Nhan M."/>
            <person name="Waterston R."/>
            <person name="Wilson R.K."/>
        </authorList>
    </citation>
    <scope>NUCLEOTIDE SEQUENCE [LARGE SCALE GENOMIC DNA]</scope>
    <source>
        <strain>LT2 / SGSC1412 / ATCC 700720</strain>
    </source>
</reference>
<accession>Q8ZL61</accession>
<organism>
    <name type="scientific">Salmonella typhimurium (strain LT2 / SGSC1412 / ATCC 700720)</name>
    <dbReference type="NCBI Taxonomy" id="99287"/>
    <lineage>
        <taxon>Bacteria</taxon>
        <taxon>Pseudomonadati</taxon>
        <taxon>Pseudomonadota</taxon>
        <taxon>Gammaproteobacteria</taxon>
        <taxon>Enterobacterales</taxon>
        <taxon>Enterobacteriaceae</taxon>
        <taxon>Salmonella</taxon>
    </lineage>
</organism>
<gene>
    <name evidence="1" type="primary">lldD</name>
    <name type="ordered locus">STM3694</name>
</gene>
<evidence type="ECO:0000255" key="1">
    <source>
        <dbReference type="HAMAP-Rule" id="MF_01559"/>
    </source>
</evidence>
<proteinExistence type="inferred from homology"/>
<keyword id="KW-0997">Cell inner membrane</keyword>
<keyword id="KW-1003">Cell membrane</keyword>
<keyword id="KW-0285">Flavoprotein</keyword>
<keyword id="KW-0288">FMN</keyword>
<keyword id="KW-0472">Membrane</keyword>
<keyword id="KW-0560">Oxidoreductase</keyword>
<keyword id="KW-1185">Reference proteome</keyword>